<sequence>MPFTLGQRWISDTESELGLGTVVAVDARTVTLLFPSTGENRLYARSDSPVTRVMFNPGDTITSHDGWQMQVEEVKEENGLLTYIGTRLDTEESGVALREVFLDSKLVFSKPQDRLFAGQIDRMDRFALRYRARKYSSEQFRMPYSGLRGQRTSLIPHQLNIAHDVGRRHAPRVLLADEVGLGKTIEAGMILHQQLLSGAAERVLIIVPETLQHQWLVEMLRRFNLRFALFDDERYAEAQHDAYNPFDTEQLVICSLDFARRSKQRLEHLCEAEWDLLVVDEAHHLVWSEDAPSREYQAIEQLAEHVPGVLLLTATPEQLGMESHFARLRLLDPNRFHDFAQFVEEQKNYRPVADAVAMLLAGNKLSNDELNMLGEMIGEQDIEPLLQAANSDSEDAQSARQELVSMLMDRHGTSRVLFRNTRNGVKGFPKRELHTIKLPLPTQYQTAIKVSGIMGARKSAEDRARDMLYPERIYQEFEGDNATWWNFDPRVEWLMGYLTSHRSQKVLVICAKAATALQLEQVLREREGIRAAVFHEGMSIIERDRAAAWFAEEDTGAQVLLCSEIGSEGRNFQFASHMVMFDLPFNPDLLEQRIGRLDRIGQAHDIQIHVPYLEKTAQSVLVRWYHEGLDAFEHTCPTGRTIYDSVYNDLINYLASPDQTEGFDDLIKNCREQHEALKAQLEQGRDRLLEIHSNGGEKAQALAESIEEQDDDTNLIAFAMNLFDIIGINQDDRGDNMIVLTPSDHMLVPDFPGLSEDGITITFDREVALAREDAQFITWEHPLIRNGLDLILSGDTGSSTISLLKNKALPVGTLLVELIYVVEAQAPKQLQLNRFLPPTPVRMLLDKNGNNLAAQVEFETFNRQLNAVNRHTGSKLVNAVQQDVHAILQLGEAQIEKSARALIDAARNEADEKLSAELSRLEALRAVNPNIRDDELTAIESNRQQVMESLDQAGWRLDALRLIVVTHQ</sequence>
<organism>
    <name type="scientific">Escherichia coli O17:K52:H18 (strain UMN026 / ExPEC)</name>
    <dbReference type="NCBI Taxonomy" id="585056"/>
    <lineage>
        <taxon>Bacteria</taxon>
        <taxon>Pseudomonadati</taxon>
        <taxon>Pseudomonadota</taxon>
        <taxon>Gammaproteobacteria</taxon>
        <taxon>Enterobacterales</taxon>
        <taxon>Enterobacteriaceae</taxon>
        <taxon>Escherichia</taxon>
    </lineage>
</organism>
<accession>B7N7T3</accession>
<keyword id="KW-0010">Activator</keyword>
<keyword id="KW-0067">ATP-binding</keyword>
<keyword id="KW-0238">DNA-binding</keyword>
<keyword id="KW-0347">Helicase</keyword>
<keyword id="KW-0378">Hydrolase</keyword>
<keyword id="KW-0547">Nucleotide-binding</keyword>
<keyword id="KW-0804">Transcription</keyword>
<keyword id="KW-0805">Transcription regulation</keyword>
<gene>
    <name evidence="1" type="primary">rapA</name>
    <name type="ordered locus">ECUMN_0060</name>
</gene>
<comment type="function">
    <text evidence="1">Transcription regulator that activates transcription by stimulating RNA polymerase (RNAP) recycling in case of stress conditions such as supercoiled DNA or high salt concentrations. Probably acts by releasing the RNAP, when it is trapped or immobilized on tightly supercoiled DNA. Does not activate transcription on linear DNA. Probably not involved in DNA repair.</text>
</comment>
<comment type="subunit">
    <text evidence="1">Interacts with the RNAP. Has a higher affinity for the core RNAP than for the holoenzyme. Its ATPase activity is stimulated by binding to RNAP.</text>
</comment>
<comment type="similarity">
    <text evidence="1">Belongs to the SNF2/RAD54 helicase family. RapA subfamily.</text>
</comment>
<proteinExistence type="inferred from homology"/>
<evidence type="ECO:0000255" key="1">
    <source>
        <dbReference type="HAMAP-Rule" id="MF_01821"/>
    </source>
</evidence>
<feature type="chain" id="PRO_1000188174" description="RNA polymerase-associated protein RapA">
    <location>
        <begin position="1"/>
        <end position="968"/>
    </location>
</feature>
<feature type="domain" description="Helicase ATP-binding" evidence="1">
    <location>
        <begin position="164"/>
        <end position="334"/>
    </location>
</feature>
<feature type="domain" description="Helicase C-terminal" evidence="1">
    <location>
        <begin position="490"/>
        <end position="662"/>
    </location>
</feature>
<feature type="short sequence motif" description="DEAH box">
    <location>
        <begin position="280"/>
        <end position="283"/>
    </location>
</feature>
<feature type="binding site" evidence="1">
    <location>
        <begin position="177"/>
        <end position="184"/>
    </location>
    <ligand>
        <name>ATP</name>
        <dbReference type="ChEBI" id="CHEBI:30616"/>
    </ligand>
</feature>
<reference key="1">
    <citation type="journal article" date="2009" name="PLoS Genet.">
        <title>Organised genome dynamics in the Escherichia coli species results in highly diverse adaptive paths.</title>
        <authorList>
            <person name="Touchon M."/>
            <person name="Hoede C."/>
            <person name="Tenaillon O."/>
            <person name="Barbe V."/>
            <person name="Baeriswyl S."/>
            <person name="Bidet P."/>
            <person name="Bingen E."/>
            <person name="Bonacorsi S."/>
            <person name="Bouchier C."/>
            <person name="Bouvet O."/>
            <person name="Calteau A."/>
            <person name="Chiapello H."/>
            <person name="Clermont O."/>
            <person name="Cruveiller S."/>
            <person name="Danchin A."/>
            <person name="Diard M."/>
            <person name="Dossat C."/>
            <person name="Karoui M.E."/>
            <person name="Frapy E."/>
            <person name="Garry L."/>
            <person name="Ghigo J.M."/>
            <person name="Gilles A.M."/>
            <person name="Johnson J."/>
            <person name="Le Bouguenec C."/>
            <person name="Lescat M."/>
            <person name="Mangenot S."/>
            <person name="Martinez-Jehanne V."/>
            <person name="Matic I."/>
            <person name="Nassif X."/>
            <person name="Oztas S."/>
            <person name="Petit M.A."/>
            <person name="Pichon C."/>
            <person name="Rouy Z."/>
            <person name="Ruf C.S."/>
            <person name="Schneider D."/>
            <person name="Tourret J."/>
            <person name="Vacherie B."/>
            <person name="Vallenet D."/>
            <person name="Medigue C."/>
            <person name="Rocha E.P.C."/>
            <person name="Denamur E."/>
        </authorList>
    </citation>
    <scope>NUCLEOTIDE SEQUENCE [LARGE SCALE GENOMIC DNA]</scope>
    <source>
        <strain>UMN026 / ExPEC</strain>
    </source>
</reference>
<protein>
    <recommendedName>
        <fullName evidence="1">RNA polymerase-associated protein RapA</fullName>
        <ecNumber evidence="1">3.6.4.-</ecNumber>
    </recommendedName>
    <alternativeName>
        <fullName evidence="1">ATP-dependent helicase HepA</fullName>
    </alternativeName>
</protein>
<dbReference type="EC" id="3.6.4.-" evidence="1"/>
<dbReference type="EMBL" id="CU928163">
    <property type="protein sequence ID" value="CAR11283.1"/>
    <property type="molecule type" value="Genomic_DNA"/>
</dbReference>
<dbReference type="RefSeq" id="WP_001117011.1">
    <property type="nucleotide sequence ID" value="NC_011751.1"/>
</dbReference>
<dbReference type="RefSeq" id="YP_002410838.1">
    <property type="nucleotide sequence ID" value="NC_011751.1"/>
</dbReference>
<dbReference type="SMR" id="B7N7T3"/>
<dbReference type="STRING" id="585056.ECUMN_0060"/>
<dbReference type="GeneID" id="75202125"/>
<dbReference type="KEGG" id="eum:ECUMN_0060"/>
<dbReference type="PATRIC" id="fig|585056.7.peg.247"/>
<dbReference type="HOGENOM" id="CLU_011520_0_0_6"/>
<dbReference type="Proteomes" id="UP000007097">
    <property type="component" value="Chromosome"/>
</dbReference>
<dbReference type="GO" id="GO:0005524">
    <property type="term" value="F:ATP binding"/>
    <property type="evidence" value="ECO:0007669"/>
    <property type="project" value="UniProtKB-UniRule"/>
</dbReference>
<dbReference type="GO" id="GO:0003677">
    <property type="term" value="F:DNA binding"/>
    <property type="evidence" value="ECO:0007669"/>
    <property type="project" value="UniProtKB-KW"/>
</dbReference>
<dbReference type="GO" id="GO:0004386">
    <property type="term" value="F:helicase activity"/>
    <property type="evidence" value="ECO:0007669"/>
    <property type="project" value="UniProtKB-UniRule"/>
</dbReference>
<dbReference type="GO" id="GO:0016817">
    <property type="term" value="F:hydrolase activity, acting on acid anhydrides"/>
    <property type="evidence" value="ECO:0007669"/>
    <property type="project" value="InterPro"/>
</dbReference>
<dbReference type="GO" id="GO:0006355">
    <property type="term" value="P:regulation of DNA-templated transcription"/>
    <property type="evidence" value="ECO:0007669"/>
    <property type="project" value="UniProtKB-UniRule"/>
</dbReference>
<dbReference type="CDD" id="cd18011">
    <property type="entry name" value="DEXDc_RapA"/>
    <property type="match status" value="1"/>
</dbReference>
<dbReference type="CDD" id="cd18793">
    <property type="entry name" value="SF2_C_SNF"/>
    <property type="match status" value="1"/>
</dbReference>
<dbReference type="FunFam" id="2.30.30.140:FF:000020">
    <property type="entry name" value="RNA polymerase-associated protein RapA"/>
    <property type="match status" value="1"/>
</dbReference>
<dbReference type="FunFam" id="2.30.30.930:FF:000001">
    <property type="entry name" value="RNA polymerase-associated protein RapA"/>
    <property type="match status" value="1"/>
</dbReference>
<dbReference type="FunFam" id="3.30.360.80:FF:000001">
    <property type="entry name" value="RNA polymerase-associated protein RapA"/>
    <property type="match status" value="1"/>
</dbReference>
<dbReference type="FunFam" id="3.40.50.10810:FF:000012">
    <property type="entry name" value="RNA polymerase-associated protein RapA"/>
    <property type="match status" value="1"/>
</dbReference>
<dbReference type="FunFam" id="3.40.50.300:FF:000350">
    <property type="entry name" value="RNA polymerase-associated protein RapA"/>
    <property type="match status" value="1"/>
</dbReference>
<dbReference type="Gene3D" id="2.30.30.140">
    <property type="match status" value="1"/>
</dbReference>
<dbReference type="Gene3D" id="2.30.30.930">
    <property type="match status" value="1"/>
</dbReference>
<dbReference type="Gene3D" id="3.30.360.80">
    <property type="match status" value="1"/>
</dbReference>
<dbReference type="Gene3D" id="6.10.140.1500">
    <property type="match status" value="1"/>
</dbReference>
<dbReference type="Gene3D" id="6.10.140.2230">
    <property type="match status" value="1"/>
</dbReference>
<dbReference type="Gene3D" id="3.40.50.300">
    <property type="entry name" value="P-loop containing nucleotide triphosphate hydrolases"/>
    <property type="match status" value="1"/>
</dbReference>
<dbReference type="Gene3D" id="3.40.50.10810">
    <property type="entry name" value="Tandem AAA-ATPase domain"/>
    <property type="match status" value="1"/>
</dbReference>
<dbReference type="HAMAP" id="MF_01821">
    <property type="entry name" value="Helicase_RapA"/>
    <property type="match status" value="1"/>
</dbReference>
<dbReference type="InterPro" id="IPR014001">
    <property type="entry name" value="Helicase_ATP-bd"/>
</dbReference>
<dbReference type="InterPro" id="IPR001650">
    <property type="entry name" value="Helicase_C-like"/>
</dbReference>
<dbReference type="InterPro" id="IPR023949">
    <property type="entry name" value="Helicase_RapA"/>
</dbReference>
<dbReference type="InterPro" id="IPR027417">
    <property type="entry name" value="P-loop_NTPase"/>
</dbReference>
<dbReference type="InterPro" id="IPR022737">
    <property type="entry name" value="RapA_C"/>
</dbReference>
<dbReference type="InterPro" id="IPR038718">
    <property type="entry name" value="SNF2-like_sf"/>
</dbReference>
<dbReference type="InterPro" id="IPR049730">
    <property type="entry name" value="SNF2/RAD54-like_C"/>
</dbReference>
<dbReference type="InterPro" id="IPR000330">
    <property type="entry name" value="SNF2_N"/>
</dbReference>
<dbReference type="InterPro" id="IPR040765">
    <property type="entry name" value="Tudor_1_RapA"/>
</dbReference>
<dbReference type="InterPro" id="IPR040766">
    <property type="entry name" value="Tudor_2_RapA"/>
</dbReference>
<dbReference type="NCBIfam" id="NF003426">
    <property type="entry name" value="PRK04914.1"/>
    <property type="match status" value="1"/>
</dbReference>
<dbReference type="PANTHER" id="PTHR45766">
    <property type="entry name" value="DNA ANNEALING HELICASE AND ENDONUCLEASE ZRANB3 FAMILY MEMBER"/>
    <property type="match status" value="1"/>
</dbReference>
<dbReference type="PANTHER" id="PTHR45766:SF6">
    <property type="entry name" value="SWI_SNF-RELATED MATRIX-ASSOCIATED ACTIN-DEPENDENT REGULATOR OF CHROMATIN SUBFAMILY A-LIKE PROTEIN 1"/>
    <property type="match status" value="1"/>
</dbReference>
<dbReference type="Pfam" id="PF00271">
    <property type="entry name" value="Helicase_C"/>
    <property type="match status" value="1"/>
</dbReference>
<dbReference type="Pfam" id="PF12137">
    <property type="entry name" value="RapA_C"/>
    <property type="match status" value="1"/>
</dbReference>
<dbReference type="Pfam" id="PF00176">
    <property type="entry name" value="SNF2-rel_dom"/>
    <property type="match status" value="1"/>
</dbReference>
<dbReference type="Pfam" id="PF18339">
    <property type="entry name" value="Tudor_1_RapA"/>
    <property type="match status" value="1"/>
</dbReference>
<dbReference type="Pfam" id="PF18337">
    <property type="entry name" value="Tudor_RapA"/>
    <property type="match status" value="1"/>
</dbReference>
<dbReference type="SMART" id="SM00487">
    <property type="entry name" value="DEXDc"/>
    <property type="match status" value="1"/>
</dbReference>
<dbReference type="SMART" id="SM00490">
    <property type="entry name" value="HELICc"/>
    <property type="match status" value="1"/>
</dbReference>
<dbReference type="SUPFAM" id="SSF52540">
    <property type="entry name" value="P-loop containing nucleoside triphosphate hydrolases"/>
    <property type="match status" value="2"/>
</dbReference>
<dbReference type="PROSITE" id="PS51192">
    <property type="entry name" value="HELICASE_ATP_BIND_1"/>
    <property type="match status" value="1"/>
</dbReference>
<dbReference type="PROSITE" id="PS51194">
    <property type="entry name" value="HELICASE_CTER"/>
    <property type="match status" value="1"/>
</dbReference>
<name>RAPA_ECOLU</name>